<evidence type="ECO:0000250" key="1"/>
<evidence type="ECO:0000255" key="2"/>
<evidence type="ECO:0000255" key="3">
    <source>
        <dbReference type="PROSITE-ProRule" id="PRU00099"/>
    </source>
</evidence>
<evidence type="ECO:0000256" key="4">
    <source>
        <dbReference type="SAM" id="MobiDB-lite"/>
    </source>
</evidence>
<evidence type="ECO:0000269" key="5">
    <source>
    </source>
</evidence>
<evidence type="ECO:0000269" key="6">
    <source ref="4"/>
</evidence>
<evidence type="ECO:0000303" key="7">
    <source ref="1"/>
</evidence>
<feature type="chain" id="PRO_0000074122" description="Soluble guanylate cyclase gcy-31">
    <location>
        <begin position="1"/>
        <end position="702"/>
    </location>
</feature>
<feature type="domain" description="Guanylate cyclase" evidence="3">
    <location>
        <begin position="435"/>
        <end position="564"/>
    </location>
</feature>
<feature type="region of interest" description="Disordered" evidence="4">
    <location>
        <begin position="614"/>
        <end position="702"/>
    </location>
</feature>
<feature type="coiled-coil region" evidence="2">
    <location>
        <begin position="368"/>
        <end position="406"/>
    </location>
</feature>
<feature type="compositionally biased region" description="Acidic residues" evidence="4">
    <location>
        <begin position="633"/>
        <end position="643"/>
    </location>
</feature>
<feature type="compositionally biased region" description="Polar residues" evidence="4">
    <location>
        <begin position="683"/>
        <end position="695"/>
    </location>
</feature>
<feature type="binding site" description="proximal binding residue" evidence="1">
    <location>
        <position position="104"/>
    </location>
    <ligand>
        <name>heme</name>
        <dbReference type="ChEBI" id="CHEBI:30413"/>
    </ligand>
    <ligandPart>
        <name>Fe</name>
        <dbReference type="ChEBI" id="CHEBI:18248"/>
    </ligandPart>
</feature>
<feature type="binding site" evidence="1">
    <location>
        <position position="440"/>
    </location>
    <ligand>
        <name>Mg(2+)</name>
        <dbReference type="ChEBI" id="CHEBI:18420"/>
    </ligand>
</feature>
<feature type="binding site" evidence="1">
    <location>
        <position position="484"/>
    </location>
    <ligand>
        <name>Mg(2+)</name>
        <dbReference type="ChEBI" id="CHEBI:18420"/>
    </ligand>
</feature>
<feature type="splice variant" id="VSP_011680" description="In isoform c." evidence="7">
    <location>
        <begin position="1"/>
        <end position="124"/>
    </location>
</feature>
<feature type="splice variant" id="VSP_011681" description="In isoform c." evidence="7">
    <original>SRTGLTLHY</original>
    <variation>MENLPGQRL</variation>
    <location>
        <begin position="125"/>
        <end position="133"/>
    </location>
</feature>
<feature type="splice variant" id="VSP_011682" description="In isoform a." evidence="7">
    <location>
        <begin position="230"/>
        <end position="337"/>
    </location>
</feature>
<comment type="function">
    <text>Synthesizes cyclic GMP (cGMP) from GTP. May play a role in embryogenesis.</text>
</comment>
<comment type="catalytic activity">
    <reaction>
        <text>GTP = 3',5'-cyclic GMP + diphosphate</text>
        <dbReference type="Rhea" id="RHEA:13665"/>
        <dbReference type="ChEBI" id="CHEBI:33019"/>
        <dbReference type="ChEBI" id="CHEBI:37565"/>
        <dbReference type="ChEBI" id="CHEBI:57746"/>
        <dbReference type="EC" id="4.6.1.2"/>
    </reaction>
</comment>
<comment type="cofactor">
    <cofactor evidence="1">
        <name>heme</name>
        <dbReference type="ChEBI" id="CHEBI:30413"/>
    </cofactor>
    <text evidence="1">Binds 1 or 2 heme groups per heterodimer.</text>
</comment>
<comment type="activity regulation">
    <text evidence="1">May be regulated by molecular oxygen. Probably not activated by nitric oxide (NO) (By similarity).</text>
</comment>
<comment type="subunit">
    <text evidence="1">Heterodimer; with other soluble guanylate cyclases.</text>
</comment>
<comment type="subcellular location">
    <subcellularLocation>
        <location evidence="1">Cytoplasm</location>
    </subcellularLocation>
</comment>
<comment type="alternative products">
    <event type="alternative splicing"/>
    <isoform>
        <id>Q86C56-1</id>
        <name>b</name>
        <name>GCY-31a</name>
        <sequence type="displayed"/>
    </isoform>
    <isoform>
        <id>Q86C56-2</id>
        <name>a</name>
        <name>GCY-31c</name>
        <sequence type="described" ref="VSP_011682"/>
    </isoform>
    <isoform>
        <id>Q86C56-3</id>
        <name>c</name>
        <name>GCY-31b</name>
        <sequence type="described" ref="VSP_011680 VSP_011681"/>
    </isoform>
</comment>
<comment type="tissue specificity">
    <text evidence="5 6">Expressed in a pair of bilaterally symmetric neurons in the head.</text>
</comment>
<comment type="miscellaneous">
    <text>There are two types of guanylate cyclases: soluble forms and membrane-associated receptor forms.</text>
</comment>
<comment type="similarity">
    <text evidence="3">Belongs to the adenylyl cyclase class-4/guanylyl cyclase family.</text>
</comment>
<sequence length="702" mass="81162">MYGLIIDHIATYIKEKYGESTWSEVKFVSGVTDDTFQMDKKFSEGLSHKLIWACHDVTGDPVDELMTNIGTSFYKFLTKFEFNKVLRVLGRTFPQFLNGLDNLHEYLRFTFPKLKPPSFYCEHESRTGLTLHYRSKRRGFLHYVQGQIRNISQELFQTEVVIELLDIEHDLNLEHVIMRLHFNNLDFNRQGTAYRNLNDSILEKVKITSDIFFDIFPFIIVFNRGMRIRNIGIGLLRVMAGIVGKKINQTFLLMRPFIRFRWEEIMLHSNNIFELISSDPIQEDEDGILVYKTTDVDQMTEERHRMGDGEREKFLSLKGQMFYMEEWESICFVGIPVMSHLPQMYKSGLFINDFALHDSSRDLVLASTQQSAELKLLLHQEAQKSRNMRENMNRLKKERRRTDKLLYQMLPKSVANQLRHGESAVACCERFDSVTILFTDIVEFTKMCSSLTPLEVIEFLKVIYTNFDKIIDTHGVYKVETIGDAYMVVSGAPTKTEHDAEFILDCASQFLVEAGKMVNMNNKIHKIDIRAGVHSGSVVAGVVGLSMPRYCLFGETVYVANKMEQNSSPMKILVSETTHNKIEESDPGLYQFERREEIEIKDDQTIQTFFVVSRHGPHRVPSPRNCESRQDDSQTEDDDDDELLLPRKSGRKSPTSEAEEELKKKGQLSFTPVSDAGIECHSRNSNKTPRQSQDLTPRKSIT</sequence>
<keyword id="KW-0025">Alternative splicing</keyword>
<keyword id="KW-0141">cGMP biosynthesis</keyword>
<keyword id="KW-0175">Coiled coil</keyword>
<keyword id="KW-0963">Cytoplasm</keyword>
<keyword id="KW-0342">GTP-binding</keyword>
<keyword id="KW-0349">Heme</keyword>
<keyword id="KW-0408">Iron</keyword>
<keyword id="KW-0456">Lyase</keyword>
<keyword id="KW-0460">Magnesium</keyword>
<keyword id="KW-0479">Metal-binding</keyword>
<keyword id="KW-0547">Nucleotide-binding</keyword>
<keyword id="KW-1185">Reference proteome</keyword>
<accession>Q86C56</accession>
<accession>Q86C57</accession>
<accession>Q86C58</accession>
<gene>
    <name type="primary">gcy-31</name>
    <name type="ORF">T07D1.1</name>
</gene>
<organism>
    <name type="scientific">Caenorhabditis elegans</name>
    <dbReference type="NCBI Taxonomy" id="6239"/>
    <lineage>
        <taxon>Eukaryota</taxon>
        <taxon>Metazoa</taxon>
        <taxon>Ecdysozoa</taxon>
        <taxon>Nematoda</taxon>
        <taxon>Chromadorea</taxon>
        <taxon>Rhabditida</taxon>
        <taxon>Rhabditina</taxon>
        <taxon>Rhabditomorpha</taxon>
        <taxon>Rhabditoidea</taxon>
        <taxon>Rhabditidae</taxon>
        <taxon>Peloderinae</taxon>
        <taxon>Caenorhabditis</taxon>
    </lineage>
</organism>
<dbReference type="EC" id="4.6.1.2"/>
<dbReference type="EMBL" id="AY275182">
    <property type="protein sequence ID" value="AAP32290.1"/>
    <property type="molecule type" value="mRNA"/>
</dbReference>
<dbReference type="EMBL" id="AY275183">
    <property type="protein sequence ID" value="AAP32291.1"/>
    <property type="molecule type" value="mRNA"/>
</dbReference>
<dbReference type="EMBL" id="AY275184">
    <property type="protein sequence ID" value="AAP32292.1"/>
    <property type="molecule type" value="mRNA"/>
</dbReference>
<dbReference type="EMBL" id="FO080846">
    <property type="protein sequence ID" value="CCD67189.1"/>
    <property type="molecule type" value="Genomic_DNA"/>
</dbReference>
<dbReference type="EMBL" id="FO080846">
    <property type="protein sequence ID" value="CCD67190.1"/>
    <property type="molecule type" value="Genomic_DNA"/>
</dbReference>
<dbReference type="EMBL" id="FO080846">
    <property type="protein sequence ID" value="CCD67191.1"/>
    <property type="molecule type" value="Genomic_DNA"/>
</dbReference>
<dbReference type="RefSeq" id="NP_001024888.1">
    <molecule id="Q86C56-2"/>
    <property type="nucleotide sequence ID" value="NM_001029717.2"/>
</dbReference>
<dbReference type="RefSeq" id="NP_001024889.1">
    <molecule id="Q86C56-1"/>
    <property type="nucleotide sequence ID" value="NM_001029718.2"/>
</dbReference>
<dbReference type="RefSeq" id="NP_001024890.1">
    <molecule id="Q86C56-3"/>
    <property type="nucleotide sequence ID" value="NM_001029719.1"/>
</dbReference>
<dbReference type="SMR" id="Q86C56"/>
<dbReference type="BioGRID" id="56156">
    <property type="interactions" value="1"/>
</dbReference>
<dbReference type="FunCoup" id="Q86C56">
    <property type="interactions" value="105"/>
</dbReference>
<dbReference type="STRING" id="6239.T07D1.1b.1"/>
<dbReference type="PaxDb" id="6239-T07D1.1b"/>
<dbReference type="EnsemblMetazoa" id="T07D1.1a.1">
    <molecule id="Q86C56-2"/>
    <property type="protein sequence ID" value="T07D1.1a.1"/>
    <property type="gene ID" value="WBGene00001551"/>
</dbReference>
<dbReference type="EnsemblMetazoa" id="T07D1.1b.1">
    <molecule id="Q86C56-1"/>
    <property type="protein sequence ID" value="T07D1.1b.1"/>
    <property type="gene ID" value="WBGene00001551"/>
</dbReference>
<dbReference type="EnsemblMetazoa" id="T07D1.1c.1">
    <molecule id="Q86C56-3"/>
    <property type="protein sequence ID" value="T07D1.1c.1"/>
    <property type="gene ID" value="WBGene00001551"/>
</dbReference>
<dbReference type="GeneID" id="191655"/>
<dbReference type="KEGG" id="cel:CELE_T07D1.1"/>
<dbReference type="UCSC" id="T07D1.1c">
    <molecule id="Q86C56-1"/>
    <property type="organism name" value="c. elegans"/>
</dbReference>
<dbReference type="AGR" id="WB:WBGene00001551"/>
<dbReference type="CTD" id="191655"/>
<dbReference type="WormBase" id="T07D1.1a">
    <molecule id="Q86C56-2"/>
    <property type="protein sequence ID" value="CE36318"/>
    <property type="gene ID" value="WBGene00001551"/>
    <property type="gene designation" value="gcy-31"/>
</dbReference>
<dbReference type="WormBase" id="T07D1.1b">
    <molecule id="Q86C56-1"/>
    <property type="protein sequence ID" value="CE36319"/>
    <property type="gene ID" value="WBGene00001551"/>
    <property type="gene designation" value="gcy-31"/>
</dbReference>
<dbReference type="WormBase" id="T07D1.1c">
    <molecule id="Q86C56-3"/>
    <property type="protein sequence ID" value="CE36320"/>
    <property type="gene ID" value="WBGene00001551"/>
    <property type="gene designation" value="gcy-31"/>
</dbReference>
<dbReference type="eggNOG" id="KOG4171">
    <property type="taxonomic scope" value="Eukaryota"/>
</dbReference>
<dbReference type="InParanoid" id="Q86C56"/>
<dbReference type="OMA" id="ACCERFD"/>
<dbReference type="OrthoDB" id="6127067at2759"/>
<dbReference type="PhylomeDB" id="Q86C56"/>
<dbReference type="PRO" id="PR:Q86C56"/>
<dbReference type="Proteomes" id="UP000001940">
    <property type="component" value="Chromosome X"/>
</dbReference>
<dbReference type="Bgee" id="WBGene00001551">
    <property type="expression patterns" value="Expressed in pharyngeal muscle cell (C elegans) and 3 other cell types or tissues"/>
</dbReference>
<dbReference type="ExpressionAtlas" id="Q86C56">
    <property type="expression patterns" value="baseline"/>
</dbReference>
<dbReference type="GO" id="GO:0008074">
    <property type="term" value="C:guanylate cyclase complex, soluble"/>
    <property type="evidence" value="ECO:0000318"/>
    <property type="project" value="GO_Central"/>
</dbReference>
<dbReference type="GO" id="GO:0005525">
    <property type="term" value="F:GTP binding"/>
    <property type="evidence" value="ECO:0007669"/>
    <property type="project" value="UniProtKB-KW"/>
</dbReference>
<dbReference type="GO" id="GO:0004383">
    <property type="term" value="F:guanylate cyclase activity"/>
    <property type="evidence" value="ECO:0000318"/>
    <property type="project" value="GO_Central"/>
</dbReference>
<dbReference type="GO" id="GO:0020037">
    <property type="term" value="F:heme binding"/>
    <property type="evidence" value="ECO:0007669"/>
    <property type="project" value="InterPro"/>
</dbReference>
<dbReference type="GO" id="GO:0046872">
    <property type="term" value="F:metal ion binding"/>
    <property type="evidence" value="ECO:0007669"/>
    <property type="project" value="UniProtKB-KW"/>
</dbReference>
<dbReference type="GO" id="GO:0070026">
    <property type="term" value="F:nitric oxide binding"/>
    <property type="evidence" value="ECO:0000318"/>
    <property type="project" value="GO_Central"/>
</dbReference>
<dbReference type="GO" id="GO:0019826">
    <property type="term" value="F:oxygen sensor activity"/>
    <property type="evidence" value="ECO:0000315"/>
    <property type="project" value="WormBase"/>
</dbReference>
<dbReference type="GO" id="GO:0038060">
    <property type="term" value="P:nitric oxide-cGMP-mediated signaling"/>
    <property type="evidence" value="ECO:0000318"/>
    <property type="project" value="GO_Central"/>
</dbReference>
<dbReference type="GO" id="GO:0070482">
    <property type="term" value="P:response to oxygen levels"/>
    <property type="evidence" value="ECO:0000315"/>
    <property type="project" value="WormBase"/>
</dbReference>
<dbReference type="CDD" id="cd07302">
    <property type="entry name" value="CHD"/>
    <property type="match status" value="1"/>
</dbReference>
<dbReference type="FunFam" id="3.30.70.1230:FF:000079">
    <property type="entry name" value="Soluble guanylate cyclase gcy-31"/>
    <property type="match status" value="1"/>
</dbReference>
<dbReference type="Gene3D" id="6.10.250.780">
    <property type="match status" value="1"/>
</dbReference>
<dbReference type="Gene3D" id="3.90.1520.10">
    <property type="entry name" value="H-NOX domain"/>
    <property type="match status" value="1"/>
</dbReference>
<dbReference type="Gene3D" id="3.30.450.260">
    <property type="entry name" value="Haem NO binding associated domain"/>
    <property type="match status" value="1"/>
</dbReference>
<dbReference type="Gene3D" id="3.30.70.1230">
    <property type="entry name" value="Nucleotide cyclase"/>
    <property type="match status" value="1"/>
</dbReference>
<dbReference type="InterPro" id="IPR001054">
    <property type="entry name" value="A/G_cyclase"/>
</dbReference>
<dbReference type="InterPro" id="IPR018297">
    <property type="entry name" value="A/G_cyclase_CS"/>
</dbReference>
<dbReference type="InterPro" id="IPR038158">
    <property type="entry name" value="H-NOX_domain_sf"/>
</dbReference>
<dbReference type="InterPro" id="IPR011644">
    <property type="entry name" value="Heme_NO-bd"/>
</dbReference>
<dbReference type="InterPro" id="IPR011645">
    <property type="entry name" value="HNOB_dom_associated"/>
</dbReference>
<dbReference type="InterPro" id="IPR042463">
    <property type="entry name" value="HNOB_dom_associated_sf"/>
</dbReference>
<dbReference type="InterPro" id="IPR024096">
    <property type="entry name" value="NO_sig/Golgi_transp_ligand-bd"/>
</dbReference>
<dbReference type="InterPro" id="IPR029787">
    <property type="entry name" value="Nucleotide_cyclase"/>
</dbReference>
<dbReference type="PANTHER" id="PTHR45655">
    <property type="entry name" value="GUANYLATE CYCLASE SOLUBLE SUBUNIT BETA-2"/>
    <property type="match status" value="1"/>
</dbReference>
<dbReference type="PANTHER" id="PTHR45655:SF10">
    <property type="entry name" value="SOLUBLE GUANYLATE CYCLASE 88E"/>
    <property type="match status" value="1"/>
</dbReference>
<dbReference type="Pfam" id="PF00211">
    <property type="entry name" value="Guanylate_cyc"/>
    <property type="match status" value="1"/>
</dbReference>
<dbReference type="Pfam" id="PF07700">
    <property type="entry name" value="HNOB"/>
    <property type="match status" value="1"/>
</dbReference>
<dbReference type="Pfam" id="PF07701">
    <property type="entry name" value="HNOBA"/>
    <property type="match status" value="1"/>
</dbReference>
<dbReference type="SMART" id="SM00044">
    <property type="entry name" value="CYCc"/>
    <property type="match status" value="1"/>
</dbReference>
<dbReference type="SUPFAM" id="SSF111126">
    <property type="entry name" value="Ligand-binding domain in the NO signalling and Golgi transport"/>
    <property type="match status" value="1"/>
</dbReference>
<dbReference type="SUPFAM" id="SSF55073">
    <property type="entry name" value="Nucleotide cyclase"/>
    <property type="match status" value="1"/>
</dbReference>
<dbReference type="PROSITE" id="PS00452">
    <property type="entry name" value="GUANYLATE_CYCLASE_1"/>
    <property type="match status" value="1"/>
</dbReference>
<dbReference type="PROSITE" id="PS50125">
    <property type="entry name" value="GUANYLATE_CYCLASE_2"/>
    <property type="match status" value="1"/>
</dbReference>
<proteinExistence type="evidence at transcript level"/>
<name>GCY31_CAEEL</name>
<protein>
    <recommendedName>
        <fullName>Soluble guanylate cyclase gcy-31</fullName>
        <ecNumber>4.6.1.2</ecNumber>
    </recommendedName>
</protein>
<reference key="1">
    <citation type="submission" date="2003-04" db="EMBL/GenBank/DDBJ databases">
        <title>Soluble guanylyl cyclases in Caenorhabditis elegans.</title>
        <authorList>
            <person name="Hudson M.L."/>
            <person name="Karow D.S."/>
            <person name="Chisholm A.D."/>
            <person name="Marletta M.A."/>
            <person name="Morton D.B."/>
        </authorList>
    </citation>
    <scope>NUCLEOTIDE SEQUENCE [MRNA] (ISOFORMS A; B AND C)</scope>
    <scope>ALTERNATIVE SPLICING</scope>
</reference>
<reference key="2">
    <citation type="journal article" date="1998" name="Science">
        <title>Genome sequence of the nematode C. elegans: a platform for investigating biology.</title>
        <authorList>
            <consortium name="The C. elegans sequencing consortium"/>
        </authorList>
    </citation>
    <scope>NUCLEOTIDE SEQUENCE [LARGE SCALE GENOMIC DNA]</scope>
    <scope>ALTERNATIVE SPLICING</scope>
    <source>
        <strain>Bristol N2</strain>
    </source>
</reference>
<reference key="3">
    <citation type="journal article" date="1997" name="Proc. Natl. Acad. Sci. U.S.A.">
        <title>Guanylyl cyclase expression in specific sensory neurons: a new family of chemosensory receptors.</title>
        <authorList>
            <person name="Yu S."/>
            <person name="Avery L."/>
            <person name="Baude E."/>
            <person name="Garbers D.L."/>
        </authorList>
    </citation>
    <scope>TISSUE SPECIFICITY</scope>
</reference>
<reference key="4">
    <citation type="book" date="2001" name="Proceedings of the 13th international C. elegans meeting">
        <title>A possible role for gcy-31 in embryogenesis.</title>
        <authorList>
            <person name="Hudson M.L."/>
            <person name="Karow D.S."/>
            <person name="Riviere K.H."/>
            <person name="Marletta M.A."/>
            <person name="Morton D.B."/>
        </authorList>
    </citation>
    <scope>POSSIBLE FUNCTION</scope>
    <scope>TISSUE SPECIFICITY</scope>
</reference>